<comment type="function">
    <text evidence="4">Catalyzes the covalent attachment of ubiquitin to other proteins. Also acts as an E3 ubiquitin-protein ligase.</text>
</comment>
<comment type="catalytic activity">
    <reaction>
        <text>S-ubiquitinyl-[E2 ubiquitin-conjugating enzyme]-L-cysteine + [acceptor protein]-L-lysine = [E2 ubiquitin-conjugating enzyme]-L-cysteine + N(6)-ubiquitinyl-[acceptor protein]-L-lysine.</text>
        <dbReference type="EC" id="2.3.2.27"/>
    </reaction>
</comment>
<comment type="catalytic activity">
    <reaction evidence="4">
        <text>S-ubiquitinyl-[E1 ubiquitin-activating enzyme]-L-cysteine + [E2 ubiquitin-conjugating enzyme]-L-cysteine = [E1 ubiquitin-activating enzyme]-L-cysteine + S-ubiquitinyl-[E2 ubiquitin-conjugating enzyme]-L-cysteine.</text>
        <dbReference type="EC" id="2.3.2.23"/>
    </reaction>
</comment>
<comment type="pathway">
    <text evidence="4">Protein modification; protein ubiquitination.</text>
</comment>
<comment type="domain">
    <text evidence="1">The RING-type zinc finger domain mediates binding to an E2 ubiquitin-conjugating enzyme.</text>
</comment>
<comment type="similarity">
    <text evidence="5">In the C-terminal section; belongs to the ubiquitin-conjugating enzyme family.</text>
</comment>
<keyword id="KW-0067">ATP-binding</keyword>
<keyword id="KW-0479">Metal-binding</keyword>
<keyword id="KW-0547">Nucleotide-binding</keyword>
<keyword id="KW-1185">Reference proteome</keyword>
<keyword id="KW-0808">Transferase</keyword>
<keyword id="KW-0833">Ubl conjugation pathway</keyword>
<keyword id="KW-0862">Zinc</keyword>
<keyword id="KW-0863">Zinc-finger</keyword>
<organismHost>
    <name type="scientific">Acanthamoeba polyphaga</name>
    <name type="common">Amoeba</name>
    <dbReference type="NCBI Taxonomy" id="5757"/>
</organismHost>
<dbReference type="EC" id="2.3.2.27"/>
<dbReference type="EC" id="2.3.2.23"/>
<dbReference type="EMBL" id="AY653733">
    <property type="protein sequence ID" value="AAV51055.1"/>
    <property type="molecule type" value="Genomic_DNA"/>
</dbReference>
<dbReference type="SMR" id="Q5UQ40"/>
<dbReference type="UniPathway" id="UPA00143"/>
<dbReference type="Proteomes" id="UP000001134">
    <property type="component" value="Genome"/>
</dbReference>
<dbReference type="GO" id="GO:0005524">
    <property type="term" value="F:ATP binding"/>
    <property type="evidence" value="ECO:0007669"/>
    <property type="project" value="UniProtKB-KW"/>
</dbReference>
<dbReference type="GO" id="GO:0061631">
    <property type="term" value="F:ubiquitin conjugating enzyme activity"/>
    <property type="evidence" value="ECO:0007669"/>
    <property type="project" value="UniProtKB-EC"/>
</dbReference>
<dbReference type="GO" id="GO:0008270">
    <property type="term" value="F:zinc ion binding"/>
    <property type="evidence" value="ECO:0007669"/>
    <property type="project" value="UniProtKB-KW"/>
</dbReference>
<dbReference type="GO" id="GO:0016567">
    <property type="term" value="P:protein ubiquitination"/>
    <property type="evidence" value="ECO:0007669"/>
    <property type="project" value="UniProtKB-UniPathway"/>
</dbReference>
<dbReference type="CDD" id="cd16655">
    <property type="entry name" value="RING-Ubox_WDSUB1-like"/>
    <property type="match status" value="1"/>
</dbReference>
<dbReference type="CDD" id="cd23833">
    <property type="entry name" value="UBCc_ApmR795-like"/>
    <property type="match status" value="1"/>
</dbReference>
<dbReference type="Gene3D" id="3.10.110.10">
    <property type="entry name" value="Ubiquitin Conjugating Enzyme"/>
    <property type="match status" value="1"/>
</dbReference>
<dbReference type="Gene3D" id="3.40.50.410">
    <property type="entry name" value="von Willebrand factor, type A domain"/>
    <property type="match status" value="1"/>
</dbReference>
<dbReference type="Gene3D" id="3.30.40.10">
    <property type="entry name" value="Zinc/RING finger domain, C3HC4 (zinc finger)"/>
    <property type="match status" value="2"/>
</dbReference>
<dbReference type="InterPro" id="IPR029071">
    <property type="entry name" value="Ubiquitin-like_domsf"/>
</dbReference>
<dbReference type="InterPro" id="IPR003613">
    <property type="entry name" value="Ubox_domain"/>
</dbReference>
<dbReference type="InterPro" id="IPR000608">
    <property type="entry name" value="UBQ-conjugat_E2_core"/>
</dbReference>
<dbReference type="InterPro" id="IPR016135">
    <property type="entry name" value="UBQ-conjugating_enzyme/RWD"/>
</dbReference>
<dbReference type="InterPro" id="IPR002035">
    <property type="entry name" value="VWF_A"/>
</dbReference>
<dbReference type="InterPro" id="IPR036465">
    <property type="entry name" value="vWFA_dom_sf"/>
</dbReference>
<dbReference type="InterPro" id="IPR052085">
    <property type="entry name" value="WD-SAM-U-box"/>
</dbReference>
<dbReference type="InterPro" id="IPR001841">
    <property type="entry name" value="Znf_RING"/>
</dbReference>
<dbReference type="InterPro" id="IPR013083">
    <property type="entry name" value="Znf_RING/FYVE/PHD"/>
</dbReference>
<dbReference type="InterPro" id="IPR024766">
    <property type="entry name" value="Znf_RING_H2"/>
</dbReference>
<dbReference type="PANTHER" id="PTHR46573">
    <property type="entry name" value="WD REPEAT, SAM AND U-BOX DOMAIN-CONTAINING PROTEIN 1"/>
    <property type="match status" value="1"/>
</dbReference>
<dbReference type="PANTHER" id="PTHR46573:SF1">
    <property type="entry name" value="WD REPEAT, SAM AND U-BOX DOMAIN-CONTAINING PROTEIN 1"/>
    <property type="match status" value="1"/>
</dbReference>
<dbReference type="Pfam" id="PF04564">
    <property type="entry name" value="U-box"/>
    <property type="match status" value="1"/>
</dbReference>
<dbReference type="Pfam" id="PF00179">
    <property type="entry name" value="UQ_con"/>
    <property type="match status" value="1"/>
</dbReference>
<dbReference type="Pfam" id="PF12678">
    <property type="entry name" value="zf-rbx1"/>
    <property type="match status" value="1"/>
</dbReference>
<dbReference type="SMART" id="SM00212">
    <property type="entry name" value="UBCc"/>
    <property type="match status" value="1"/>
</dbReference>
<dbReference type="SMART" id="SM00504">
    <property type="entry name" value="Ubox"/>
    <property type="match status" value="1"/>
</dbReference>
<dbReference type="SUPFAM" id="SSF57850">
    <property type="entry name" value="RING/U-box"/>
    <property type="match status" value="2"/>
</dbReference>
<dbReference type="SUPFAM" id="SSF54495">
    <property type="entry name" value="UBC-like"/>
    <property type="match status" value="1"/>
</dbReference>
<dbReference type="SUPFAM" id="SSF54236">
    <property type="entry name" value="Ubiquitin-like"/>
    <property type="match status" value="1"/>
</dbReference>
<dbReference type="SUPFAM" id="SSF53300">
    <property type="entry name" value="vWA-like"/>
    <property type="match status" value="1"/>
</dbReference>
<dbReference type="PROSITE" id="PS51698">
    <property type="entry name" value="U_BOX"/>
    <property type="match status" value="1"/>
</dbReference>
<dbReference type="PROSITE" id="PS50127">
    <property type="entry name" value="UBC_2"/>
    <property type="match status" value="1"/>
</dbReference>
<dbReference type="PROSITE" id="PS50234">
    <property type="entry name" value="VWFA"/>
    <property type="match status" value="1"/>
</dbReference>
<dbReference type="PROSITE" id="PS50089">
    <property type="entry name" value="ZF_RING_2"/>
    <property type="match status" value="1"/>
</dbReference>
<accession>Q5UQ40</accession>
<gene>
    <name type="ordered locus">MIMI_R795</name>
</gene>
<name>UBC4_MIMIV</name>
<protein>
    <recommendedName>
        <fullName>Probable bifunctional E2/E3 enzyme R795</fullName>
    </recommendedName>
    <domain>
        <recommendedName>
            <fullName>E3 ubiquitin-protein ligase</fullName>
            <ecNumber>2.3.2.27</ecNumber>
        </recommendedName>
        <alternativeName>
            <fullName>RING-type E3 ubiquitin transferase</fullName>
        </alternativeName>
    </domain>
    <domain>
        <recommendedName>
            <fullName>Ubiquitin-conjugating enzyme E2</fullName>
            <ecNumber>2.3.2.23</ecNumber>
        </recommendedName>
        <alternativeName>
            <fullName>E2 ubiquitin-conjugating enzyme</fullName>
        </alternativeName>
    </domain>
</protein>
<sequence>MEQIVTFGGITIDNVSPDHIQQLYSVKLNGTSNNEEIPTEFPNIIQSVCSCDKHVVELTMDVFKLVDTTENSSCAICRYQENEPCIEHKSSESNTKCPIAQSVSCSHSFHACCISRWLHTKKTCPLCNIEWQLIGANNDSVVIYFDDKNQEFKLSDNLVEDIGRQFGIDMDNYIVCKNKSPVTEYKNSTYALCTRDRHNSQNGQTNLKIICEFDSKTENLFIKYSTTIEELRKLVSQTFDLFKDQVKLIYNNIEISKDFDNLTVFNIGIKNDSNLAVECYKSFTYDMEITNNFMVLYVPDTFNTTNSSNNIQSVVSGSIAWIPQPFIDNVTNKDLRCLLSSLYILVKKVNLNTELIQSVTDRFEKYMELYGMHYRQIKLAKDSLRCLLEMNHFNNKDRMILSCTFYELIDRIQRDNNINKNPLLSSNLICNLILSDKQVNEQTKINWKFLAKDVRITKVFNIYSPLVLTNSVPPLLTLNKNLDVVVFTGKGKDVSLPIILYDTLTNSETDVNAAELGKIVSDKGDLMMVDDRIYEEAIMVCIDTSNSMSKASDFDEDIKLKRSSIIETKNRFYEILKTESHSSPQESDIRQLTNTIIWFITHPNFEDWYRKLYSQELIRSIACFEQKVYPNFAMMLVKYPWFFNKLLTSKKVVVNNTWYSFIRNESNSNYNETKYSKEPLQEFLCPISHEIMEHPVVAKDGFTYEKSNILKWFENKSTSPMTNEKISKKICDNKVLKSIIRDWKENNTVIEQSDKLSVTIKLPDPWNETVIHYNETDNIWDLIYQIYHITGLSHDQYKLTSNYWAIDKSSLIKQISSKIKIHPFEKKMVDVKICDKTYFFGTENTMTVSSFYTVGNLLYKLKSRKYHRYAVWYGLKDSGDGFQRGTILSPHDKLIDYSEMTLEIHSSNRYKTPKGNHLSRLDVVKKLFDAYINRSIAYSFNTAIGLMSFSDKSVLECAISPFYESFREKVNELDTSGATALYECLKDSIENLIEWKNADLENRSKAKLRIICLTDGKDTGLDKFKNTVKHKSQYHNVTIDCILIGSDYDNYLGKIGEKTNGYVFNPSTIKYALDIMELETMISSTNRKTIFYHNTIDEKTIPPIINPTKKLHAKAISPMEIISKTNENTKLSQKLIRVQREIVDVMKNQHPDIDVYINEQDISFWKIVFKGPDSTPYKNGTWLAYIQFTEEYPNIAPNIRFVTPIKHCNINNYGRVCHSILDRNYTPNVKISLILQCIYGLLLNPDVNDPLDTNLAMIYYDANGLYEAQIIDYVNKFALKSREEWNQELAKNQFKNW</sequence>
<reference key="1">
    <citation type="journal article" date="2004" name="Science">
        <title>The 1.2-megabase genome sequence of Mimivirus.</title>
        <authorList>
            <person name="Raoult D."/>
            <person name="Audic S."/>
            <person name="Robert C."/>
            <person name="Abergel C."/>
            <person name="Renesto P."/>
            <person name="Ogata H."/>
            <person name="La Scola B."/>
            <person name="Susan M."/>
            <person name="Claverie J.-M."/>
        </authorList>
    </citation>
    <scope>NUCLEOTIDE SEQUENCE [LARGE SCALE GENOMIC DNA]</scope>
    <source>
        <strain>Rowbotham-Bradford</strain>
    </source>
</reference>
<organism>
    <name type="scientific">Acanthamoeba polyphaga mimivirus</name>
    <name type="common">APMV</name>
    <dbReference type="NCBI Taxonomy" id="212035"/>
    <lineage>
        <taxon>Viruses</taxon>
        <taxon>Varidnaviria</taxon>
        <taxon>Bamfordvirae</taxon>
        <taxon>Nucleocytoviricota</taxon>
        <taxon>Megaviricetes</taxon>
        <taxon>Imitervirales</taxon>
        <taxon>Mimiviridae</taxon>
        <taxon>Megamimivirinae</taxon>
        <taxon>Mimivirus</taxon>
        <taxon>Mimivirus bradfordmassiliense</taxon>
    </lineage>
</organism>
<proteinExistence type="inferred from homology"/>
<evidence type="ECO:0000250" key="1"/>
<evidence type="ECO:0000255" key="2">
    <source>
        <dbReference type="PROSITE-ProRule" id="PRU00175"/>
    </source>
</evidence>
<evidence type="ECO:0000255" key="3">
    <source>
        <dbReference type="PROSITE-ProRule" id="PRU00219"/>
    </source>
</evidence>
<evidence type="ECO:0000255" key="4">
    <source>
        <dbReference type="PROSITE-ProRule" id="PRU00388"/>
    </source>
</evidence>
<evidence type="ECO:0000305" key="5"/>
<feature type="chain" id="PRO_0000309555" description="Probable bifunctional E2/E3 enzyme R795">
    <location>
        <begin position="1"/>
        <end position="1297"/>
    </location>
</feature>
<feature type="domain" description="U-box">
    <location>
        <begin position="678"/>
        <end position="750"/>
    </location>
</feature>
<feature type="domain" description="VWFA" evidence="3">
    <location>
        <begin position="899"/>
        <end position="1082"/>
    </location>
</feature>
<feature type="domain" description="UBC core" evidence="4">
    <location>
        <begin position="1133"/>
        <end position="1279"/>
    </location>
</feature>
<feature type="zinc finger region" description="RING-type; atypical" evidence="2">
    <location>
        <begin position="74"/>
        <end position="128"/>
    </location>
</feature>
<feature type="active site" description="Glycyl thioester intermediate" evidence="4">
    <location>
        <position position="1217"/>
    </location>
</feature>